<name>RL36_COXBU</name>
<accession>Q4AAY2</accession>
<reference key="1">
    <citation type="journal article" date="2003" name="Proc. Natl. Acad. Sci. U.S.A.">
        <title>Complete genome sequence of the Q-fever pathogen, Coxiella burnetii.</title>
        <authorList>
            <person name="Seshadri R."/>
            <person name="Paulsen I.T."/>
            <person name="Eisen J.A."/>
            <person name="Read T.D."/>
            <person name="Nelson K.E."/>
            <person name="Nelson W.C."/>
            <person name="Ward N.L."/>
            <person name="Tettelin H."/>
            <person name="Davidsen T.M."/>
            <person name="Beanan M.J."/>
            <person name="DeBoy R.T."/>
            <person name="Daugherty S.C."/>
            <person name="Brinkac L.M."/>
            <person name="Madupu R."/>
            <person name="Dodson R.J."/>
            <person name="Khouri H.M."/>
            <person name="Lee K.H."/>
            <person name="Carty H.A."/>
            <person name="Scanlan D."/>
            <person name="Heinzen R.A."/>
            <person name="Thompson H.A."/>
            <person name="Samuel J.E."/>
            <person name="Fraser C.M."/>
            <person name="Heidelberg J.F."/>
        </authorList>
    </citation>
    <scope>NUCLEOTIDE SEQUENCE [LARGE SCALE GENOMIC DNA]</scope>
    <source>
        <strain>RSA 493 / Nine Mile phase I</strain>
    </source>
</reference>
<proteinExistence type="inferred from homology"/>
<gene>
    <name evidence="1" type="primary">rpmJ</name>
    <name type="ordered locus">CBU_2097</name>
</gene>
<organism>
    <name type="scientific">Coxiella burnetii (strain RSA 493 / Nine Mile phase I)</name>
    <dbReference type="NCBI Taxonomy" id="227377"/>
    <lineage>
        <taxon>Bacteria</taxon>
        <taxon>Pseudomonadati</taxon>
        <taxon>Pseudomonadota</taxon>
        <taxon>Gammaproteobacteria</taxon>
        <taxon>Legionellales</taxon>
        <taxon>Coxiellaceae</taxon>
        <taxon>Coxiella</taxon>
    </lineage>
</organism>
<evidence type="ECO:0000255" key="1">
    <source>
        <dbReference type="HAMAP-Rule" id="MF_00251"/>
    </source>
</evidence>
<evidence type="ECO:0000305" key="2"/>
<protein>
    <recommendedName>
        <fullName evidence="1">Large ribosomal subunit protein bL36</fullName>
    </recommendedName>
    <alternativeName>
        <fullName evidence="2">50S ribosomal protein L36</fullName>
    </alternativeName>
</protein>
<feature type="chain" id="PRO_0000302191" description="Large ribosomal subunit protein bL36">
    <location>
        <begin position="1"/>
        <end position="40"/>
    </location>
</feature>
<keyword id="KW-1185">Reference proteome</keyword>
<keyword id="KW-0687">Ribonucleoprotein</keyword>
<keyword id="KW-0689">Ribosomal protein</keyword>
<sequence>MKVRASVKRMCRNCKVIRRNGVVRVICSDARHKQRQKGGK</sequence>
<comment type="similarity">
    <text evidence="1">Belongs to the bacterial ribosomal protein bL36 family.</text>
</comment>
<dbReference type="EMBL" id="AE016828">
    <property type="protein sequence ID" value="AAZ22629.1"/>
    <property type="molecule type" value="Genomic_DNA"/>
</dbReference>
<dbReference type="RefSeq" id="WP_005771506.1">
    <property type="nucleotide sequence ID" value="NZ_CDBG01000001.1"/>
</dbReference>
<dbReference type="RefSeq" id="YP_338278.1">
    <property type="nucleotide sequence ID" value="NC_002971.4"/>
</dbReference>
<dbReference type="SMR" id="Q4AAY2"/>
<dbReference type="STRING" id="227377.CBU_2097"/>
<dbReference type="DNASU" id="3704276"/>
<dbReference type="EnsemblBacteria" id="AAZ22629">
    <property type="protein sequence ID" value="AAZ22629"/>
    <property type="gene ID" value="CBU_2097"/>
</dbReference>
<dbReference type="GeneID" id="3704276"/>
<dbReference type="KEGG" id="cbu:CBU_2097"/>
<dbReference type="PATRIC" id="fig|227377.7.peg.254"/>
<dbReference type="eggNOG" id="COG0257">
    <property type="taxonomic scope" value="Bacteria"/>
</dbReference>
<dbReference type="HOGENOM" id="CLU_135723_6_2_6"/>
<dbReference type="OrthoDB" id="9802520at2"/>
<dbReference type="Proteomes" id="UP000002671">
    <property type="component" value="Chromosome"/>
</dbReference>
<dbReference type="GO" id="GO:0005737">
    <property type="term" value="C:cytoplasm"/>
    <property type="evidence" value="ECO:0007669"/>
    <property type="project" value="UniProtKB-ARBA"/>
</dbReference>
<dbReference type="GO" id="GO:1990904">
    <property type="term" value="C:ribonucleoprotein complex"/>
    <property type="evidence" value="ECO:0007669"/>
    <property type="project" value="UniProtKB-KW"/>
</dbReference>
<dbReference type="GO" id="GO:0005840">
    <property type="term" value="C:ribosome"/>
    <property type="evidence" value="ECO:0007669"/>
    <property type="project" value="UniProtKB-KW"/>
</dbReference>
<dbReference type="GO" id="GO:0003735">
    <property type="term" value="F:structural constituent of ribosome"/>
    <property type="evidence" value="ECO:0007669"/>
    <property type="project" value="InterPro"/>
</dbReference>
<dbReference type="GO" id="GO:0006412">
    <property type="term" value="P:translation"/>
    <property type="evidence" value="ECO:0007669"/>
    <property type="project" value="UniProtKB-UniRule"/>
</dbReference>
<dbReference type="HAMAP" id="MF_00251">
    <property type="entry name" value="Ribosomal_bL36"/>
    <property type="match status" value="1"/>
</dbReference>
<dbReference type="InterPro" id="IPR000473">
    <property type="entry name" value="Ribosomal_bL36"/>
</dbReference>
<dbReference type="InterPro" id="IPR035977">
    <property type="entry name" value="Ribosomal_bL36_sp"/>
</dbReference>
<dbReference type="NCBIfam" id="TIGR01022">
    <property type="entry name" value="rpmJ_bact"/>
    <property type="match status" value="1"/>
</dbReference>
<dbReference type="PANTHER" id="PTHR42888">
    <property type="entry name" value="50S RIBOSOMAL PROTEIN L36, CHLOROPLASTIC"/>
    <property type="match status" value="1"/>
</dbReference>
<dbReference type="PANTHER" id="PTHR42888:SF1">
    <property type="entry name" value="LARGE RIBOSOMAL SUBUNIT PROTEIN BL36C"/>
    <property type="match status" value="1"/>
</dbReference>
<dbReference type="Pfam" id="PF00444">
    <property type="entry name" value="Ribosomal_L36"/>
    <property type="match status" value="1"/>
</dbReference>
<dbReference type="SUPFAM" id="SSF57840">
    <property type="entry name" value="Ribosomal protein L36"/>
    <property type="match status" value="1"/>
</dbReference>
<dbReference type="PROSITE" id="PS00828">
    <property type="entry name" value="RIBOSOMAL_L36"/>
    <property type="match status" value="1"/>
</dbReference>